<name>SUCB1_PIG</name>
<feature type="transit peptide" description="Mitochondrion" evidence="1">
    <location>
        <begin position="1" status="less than"/>
        <end position="14"/>
    </location>
</feature>
<feature type="chain" id="PRO_0000033354" description="Succinate--CoA ligase [ADP-forming] subunit beta, mitochondrial">
    <location>
        <begin position="15"/>
        <end position="425"/>
    </location>
</feature>
<feature type="domain" description="ATP-grasp" evidence="4">
    <location>
        <begin position="23"/>
        <end position="250"/>
    </location>
</feature>
<feature type="binding site" evidence="4">
    <location>
        <position position="60"/>
    </location>
    <ligand>
        <name>ATP</name>
        <dbReference type="ChEBI" id="CHEBI:30616"/>
    </ligand>
</feature>
<feature type="binding site" evidence="4">
    <location>
        <begin position="67"/>
        <end position="69"/>
    </location>
    <ligand>
        <name>ATP</name>
        <dbReference type="ChEBI" id="CHEBI:30616"/>
    </ligand>
</feature>
<feature type="binding site" evidence="4">
    <location>
        <position position="220"/>
    </location>
    <ligand>
        <name>Mg(2+)</name>
        <dbReference type="ChEBI" id="CHEBI:18420"/>
    </ligand>
</feature>
<feature type="binding site" evidence="4">
    <location>
        <position position="234"/>
    </location>
    <ligand>
        <name>Mg(2+)</name>
        <dbReference type="ChEBI" id="CHEBI:18420"/>
    </ligand>
</feature>
<feature type="binding site" evidence="4">
    <location>
        <position position="285"/>
    </location>
    <ligand>
        <name>substrate</name>
        <note>ligand shared with subunit alpha</note>
    </ligand>
</feature>
<feature type="binding site" evidence="4">
    <location>
        <begin position="342"/>
        <end position="344"/>
    </location>
    <ligand>
        <name>substrate</name>
        <note>ligand shared with subunit alpha</note>
    </ligand>
</feature>
<feature type="site" description="Important for substrate specificity" evidence="4">
    <location>
        <position position="56"/>
    </location>
</feature>
<feature type="site" description="Important for substrate specificity" evidence="4">
    <location>
        <position position="124"/>
    </location>
</feature>
<feature type="modified residue" description="N6-acetyllysine" evidence="2">
    <location>
        <position position="40"/>
    </location>
</feature>
<feature type="modified residue" description="Phosphotyrosine" evidence="2">
    <location>
        <position position="46"/>
    </location>
</feature>
<feature type="modified residue" description="N6-acetyllysine; alternate" evidence="3">
    <location>
        <position position="50"/>
    </location>
</feature>
<feature type="modified residue" description="N6-succinyllysine; alternate" evidence="3">
    <location>
        <position position="50"/>
    </location>
</feature>
<feature type="modified residue" description="N6-acetyllysine" evidence="3">
    <location>
        <position position="91"/>
    </location>
</feature>
<feature type="modified residue" description="N6-acetyllysine" evidence="3">
    <location>
        <position position="101"/>
    </location>
</feature>
<feature type="modified residue" description="N6-acetyllysine" evidence="2">
    <location>
        <position position="105"/>
    </location>
</feature>
<feature type="modified residue" description="N6-acetyllysine" evidence="3">
    <location>
        <position position="178"/>
    </location>
</feature>
<feature type="modified residue" description="Phosphoserine" evidence="3">
    <location>
        <position position="241"/>
    </location>
</feature>
<feature type="modified residue" description="Phosphothreonine" evidence="3">
    <location>
        <position position="303"/>
    </location>
</feature>
<feature type="modified residue" description="N6-acetyllysine" evidence="3">
    <location>
        <position position="330"/>
    </location>
</feature>
<feature type="modified residue" description="N6-acetyllysine" evidence="3">
    <location>
        <position position="400"/>
    </location>
</feature>
<feature type="non-terminal residue">
    <location>
        <position position="1"/>
    </location>
</feature>
<evidence type="ECO:0000250" key="1"/>
<evidence type="ECO:0000250" key="2">
    <source>
        <dbReference type="UniProtKB" id="Q9P2R7"/>
    </source>
</evidence>
<evidence type="ECO:0000250" key="3">
    <source>
        <dbReference type="UniProtKB" id="Q9Z2I9"/>
    </source>
</evidence>
<evidence type="ECO:0000255" key="4">
    <source>
        <dbReference type="HAMAP-Rule" id="MF_03220"/>
    </source>
</evidence>
<proteinExistence type="evidence at transcript level"/>
<accession>O97580</accession>
<protein>
    <recommendedName>
        <fullName evidence="4">Succinate--CoA ligase [ADP-forming] subunit beta, mitochondrial</fullName>
        <ecNumber evidence="4">6.2.1.5</ecNumber>
    </recommendedName>
    <alternativeName>
        <fullName evidence="4">ATP-specific succinyl-CoA synthetase subunit beta</fullName>
        <shortName evidence="4">A-SCS</shortName>
    </alternativeName>
    <alternativeName>
        <fullName evidence="4">Succinyl-CoA synthetase beta-A chain</fullName>
        <shortName evidence="4">SCS-betaA</shortName>
    </alternativeName>
</protein>
<dbReference type="EC" id="6.2.1.5" evidence="4"/>
<dbReference type="EMBL" id="AF061966">
    <property type="protein sequence ID" value="AAC69751.1"/>
    <property type="molecule type" value="mRNA"/>
</dbReference>
<dbReference type="SMR" id="O97580"/>
<dbReference type="FunCoup" id="O97580">
    <property type="interactions" value="907"/>
</dbReference>
<dbReference type="STRING" id="9823.ENSSSCP00000046548"/>
<dbReference type="iPTMnet" id="O97580"/>
<dbReference type="PaxDb" id="9823-ENSSSCP00000010036"/>
<dbReference type="PeptideAtlas" id="O97580"/>
<dbReference type="eggNOG" id="KOG2799">
    <property type="taxonomic scope" value="Eukaryota"/>
</dbReference>
<dbReference type="InParanoid" id="O97580"/>
<dbReference type="UniPathway" id="UPA00223">
    <property type="reaction ID" value="UER00999"/>
</dbReference>
<dbReference type="Proteomes" id="UP000008227">
    <property type="component" value="Unplaced"/>
</dbReference>
<dbReference type="Proteomes" id="UP000314985">
    <property type="component" value="Unplaced"/>
</dbReference>
<dbReference type="Proteomes" id="UP000694570">
    <property type="component" value="Unplaced"/>
</dbReference>
<dbReference type="Proteomes" id="UP000694571">
    <property type="component" value="Unplaced"/>
</dbReference>
<dbReference type="Proteomes" id="UP000694720">
    <property type="component" value="Unplaced"/>
</dbReference>
<dbReference type="Proteomes" id="UP000694722">
    <property type="component" value="Unplaced"/>
</dbReference>
<dbReference type="Proteomes" id="UP000694723">
    <property type="component" value="Unplaced"/>
</dbReference>
<dbReference type="Proteomes" id="UP000694724">
    <property type="component" value="Unplaced"/>
</dbReference>
<dbReference type="Proteomes" id="UP000694725">
    <property type="component" value="Unplaced"/>
</dbReference>
<dbReference type="Proteomes" id="UP000694726">
    <property type="component" value="Unplaced"/>
</dbReference>
<dbReference type="Proteomes" id="UP000694727">
    <property type="component" value="Unplaced"/>
</dbReference>
<dbReference type="Proteomes" id="UP000694728">
    <property type="component" value="Unplaced"/>
</dbReference>
<dbReference type="GO" id="GO:0005739">
    <property type="term" value="C:mitochondrion"/>
    <property type="evidence" value="ECO:0000318"/>
    <property type="project" value="GO_Central"/>
</dbReference>
<dbReference type="GO" id="GO:0042709">
    <property type="term" value="C:succinate-CoA ligase complex"/>
    <property type="evidence" value="ECO:0000318"/>
    <property type="project" value="GO_Central"/>
</dbReference>
<dbReference type="GO" id="GO:0005524">
    <property type="term" value="F:ATP binding"/>
    <property type="evidence" value="ECO:0007669"/>
    <property type="project" value="UniProtKB-KW"/>
</dbReference>
<dbReference type="GO" id="GO:0046872">
    <property type="term" value="F:metal ion binding"/>
    <property type="evidence" value="ECO:0007669"/>
    <property type="project" value="UniProtKB-KW"/>
</dbReference>
<dbReference type="GO" id="GO:0004775">
    <property type="term" value="F:succinate-CoA ligase (ADP-forming) activity"/>
    <property type="evidence" value="ECO:0000318"/>
    <property type="project" value="GO_Central"/>
</dbReference>
<dbReference type="GO" id="GO:0006104">
    <property type="term" value="P:succinyl-CoA metabolic process"/>
    <property type="evidence" value="ECO:0000318"/>
    <property type="project" value="GO_Central"/>
</dbReference>
<dbReference type="GO" id="GO:0006099">
    <property type="term" value="P:tricarboxylic acid cycle"/>
    <property type="evidence" value="ECO:0000318"/>
    <property type="project" value="GO_Central"/>
</dbReference>
<dbReference type="FunFam" id="3.30.470.20:FF:000002">
    <property type="entry name" value="Succinate--CoA ligase [ADP-forming] subunit beta"/>
    <property type="match status" value="1"/>
</dbReference>
<dbReference type="FunFam" id="3.40.50.261:FF:000001">
    <property type="entry name" value="Succinate--CoA ligase [ADP-forming] subunit beta"/>
    <property type="match status" value="1"/>
</dbReference>
<dbReference type="FunFam" id="3.30.1490.20:FF:000040">
    <property type="entry name" value="Succinate--CoA ligase [ADP-forming] subunit beta mitochondrial"/>
    <property type="match status" value="1"/>
</dbReference>
<dbReference type="Gene3D" id="3.30.1490.20">
    <property type="entry name" value="ATP-grasp fold, A domain"/>
    <property type="match status" value="1"/>
</dbReference>
<dbReference type="Gene3D" id="3.30.470.20">
    <property type="entry name" value="ATP-grasp fold, B domain"/>
    <property type="match status" value="1"/>
</dbReference>
<dbReference type="Gene3D" id="3.40.50.261">
    <property type="entry name" value="Succinyl-CoA synthetase domains"/>
    <property type="match status" value="1"/>
</dbReference>
<dbReference type="HAMAP" id="MF_00558">
    <property type="entry name" value="Succ_CoA_beta"/>
    <property type="match status" value="1"/>
</dbReference>
<dbReference type="HAMAP" id="MF_03220">
    <property type="entry name" value="Succ_CoA_betaA_euk"/>
    <property type="match status" value="1"/>
</dbReference>
<dbReference type="InterPro" id="IPR011761">
    <property type="entry name" value="ATP-grasp"/>
</dbReference>
<dbReference type="InterPro" id="IPR013650">
    <property type="entry name" value="ATP-grasp_succ-CoA_synth-type"/>
</dbReference>
<dbReference type="InterPro" id="IPR013815">
    <property type="entry name" value="ATP_grasp_subdomain_1"/>
</dbReference>
<dbReference type="InterPro" id="IPR017866">
    <property type="entry name" value="Succ-CoA_synthase_bsu_CS"/>
</dbReference>
<dbReference type="InterPro" id="IPR005811">
    <property type="entry name" value="SUCC_ACL_C"/>
</dbReference>
<dbReference type="InterPro" id="IPR034723">
    <property type="entry name" value="Succ_CoA_betaA_euk"/>
</dbReference>
<dbReference type="InterPro" id="IPR005809">
    <property type="entry name" value="Succ_CoA_ligase-like_bsu"/>
</dbReference>
<dbReference type="InterPro" id="IPR016102">
    <property type="entry name" value="Succinyl-CoA_synth-like"/>
</dbReference>
<dbReference type="NCBIfam" id="NF001913">
    <property type="entry name" value="PRK00696.1"/>
    <property type="match status" value="1"/>
</dbReference>
<dbReference type="NCBIfam" id="TIGR01016">
    <property type="entry name" value="sucCoAbeta"/>
    <property type="match status" value="1"/>
</dbReference>
<dbReference type="PANTHER" id="PTHR11815:SF1">
    <property type="entry name" value="SUCCINATE--COA LIGASE [ADP-FORMING] SUBUNIT BETA, MITOCHONDRIAL"/>
    <property type="match status" value="1"/>
</dbReference>
<dbReference type="PANTHER" id="PTHR11815">
    <property type="entry name" value="SUCCINYL-COA SYNTHETASE BETA CHAIN"/>
    <property type="match status" value="1"/>
</dbReference>
<dbReference type="Pfam" id="PF08442">
    <property type="entry name" value="ATP-grasp_2"/>
    <property type="match status" value="1"/>
</dbReference>
<dbReference type="Pfam" id="PF00549">
    <property type="entry name" value="Ligase_CoA"/>
    <property type="match status" value="1"/>
</dbReference>
<dbReference type="PIRSF" id="PIRSF001554">
    <property type="entry name" value="SucCS_beta"/>
    <property type="match status" value="1"/>
</dbReference>
<dbReference type="SUPFAM" id="SSF56059">
    <property type="entry name" value="Glutathione synthetase ATP-binding domain-like"/>
    <property type="match status" value="1"/>
</dbReference>
<dbReference type="SUPFAM" id="SSF52210">
    <property type="entry name" value="Succinyl-CoA synthetase domains"/>
    <property type="match status" value="1"/>
</dbReference>
<dbReference type="PROSITE" id="PS50975">
    <property type="entry name" value="ATP_GRASP"/>
    <property type="match status" value="1"/>
</dbReference>
<dbReference type="PROSITE" id="PS01217">
    <property type="entry name" value="SUCCINYL_COA_LIG_3"/>
    <property type="match status" value="1"/>
</dbReference>
<reference key="1">
    <citation type="journal article" date="1998" name="J. Biol. Chem.">
        <title>Genetic evidence for the expression of ATP- and GTP-specific succinyl-CoA synthetases in multicellular eucaryotes.</title>
        <authorList>
            <person name="Johnson J.D."/>
            <person name="Mehus J.G."/>
            <person name="Tews K."/>
            <person name="Milavetz B.I."/>
            <person name="Lambeth D.O."/>
        </authorList>
    </citation>
    <scope>NUCLEOTIDE SEQUENCE [MRNA]</scope>
    <source>
        <tissue>Heart</tissue>
    </source>
</reference>
<organism>
    <name type="scientific">Sus scrofa</name>
    <name type="common">Pig</name>
    <dbReference type="NCBI Taxonomy" id="9823"/>
    <lineage>
        <taxon>Eukaryota</taxon>
        <taxon>Metazoa</taxon>
        <taxon>Chordata</taxon>
        <taxon>Craniata</taxon>
        <taxon>Vertebrata</taxon>
        <taxon>Euteleostomi</taxon>
        <taxon>Mammalia</taxon>
        <taxon>Eutheria</taxon>
        <taxon>Laurasiatheria</taxon>
        <taxon>Artiodactyla</taxon>
        <taxon>Suina</taxon>
        <taxon>Suidae</taxon>
        <taxon>Sus</taxon>
    </lineage>
</organism>
<keyword id="KW-0007">Acetylation</keyword>
<keyword id="KW-0067">ATP-binding</keyword>
<keyword id="KW-0436">Ligase</keyword>
<keyword id="KW-0460">Magnesium</keyword>
<keyword id="KW-0479">Metal-binding</keyword>
<keyword id="KW-0496">Mitochondrion</keyword>
<keyword id="KW-0547">Nucleotide-binding</keyword>
<keyword id="KW-0597">Phosphoprotein</keyword>
<keyword id="KW-1185">Reference proteome</keyword>
<keyword id="KW-0809">Transit peptide</keyword>
<keyword id="KW-0816">Tricarboxylic acid cycle</keyword>
<comment type="function">
    <text evidence="4">ATP-specific succinyl-CoA synthetase functions in the citric acid cycle (TCA), coupling the hydrolysis of succinyl-CoA to the synthesis of ATP and thus represents the only step of substrate-level phosphorylation in the TCA. The beta subunit provides nucleotide specificity of the enzyme and binds the substrate succinate, while the binding sites for coenzyme A and phosphate are found in the alpha subunit.</text>
</comment>
<comment type="catalytic activity">
    <reaction evidence="4">
        <text>succinate + ATP + CoA = succinyl-CoA + ADP + phosphate</text>
        <dbReference type="Rhea" id="RHEA:17661"/>
        <dbReference type="ChEBI" id="CHEBI:30031"/>
        <dbReference type="ChEBI" id="CHEBI:30616"/>
        <dbReference type="ChEBI" id="CHEBI:43474"/>
        <dbReference type="ChEBI" id="CHEBI:57287"/>
        <dbReference type="ChEBI" id="CHEBI:57292"/>
        <dbReference type="ChEBI" id="CHEBI:456216"/>
        <dbReference type="EC" id="6.2.1.5"/>
    </reaction>
</comment>
<comment type="cofactor">
    <cofactor evidence="4">
        <name>Mg(2+)</name>
        <dbReference type="ChEBI" id="CHEBI:18420"/>
    </cofactor>
    <text evidence="4">Binds 1 Mg(2+) ion per subunit.</text>
</comment>
<comment type="pathway">
    <text evidence="4">Carbohydrate metabolism; tricarboxylic acid cycle; succinate from succinyl-CoA (ligase route): step 1/1.</text>
</comment>
<comment type="subunit">
    <text evidence="2 4">Heterodimer of an alpha and a beta subunit. The beta subunit determines specificity for ATP. Interacts with ALAS2 (By similarity).</text>
</comment>
<comment type="subcellular location">
    <subcellularLocation>
        <location evidence="4">Mitochondrion</location>
    </subcellularLocation>
</comment>
<comment type="similarity">
    <text evidence="4">Belongs to the succinate/malate CoA ligase beta subunit family. ATP-specific subunit beta subfamily.</text>
</comment>
<sequence length="425" mass="46259">NNHGLQIQQQQQRNLSLHEYMSMELLQEAGVSIPKGHVAKSPDEAYAIAKKLGSKDVVIKAQVLAGGRGKGTFESGLKGGVKIVFSPEEAKAVSSQMIGKKLFTKQTGEKGRICNQVLVCERRYPRREYYFAITMERSFQGPVLIGSSQGGVNIEDVAAETPEAIVKEPIDIVEGIKKEQAVRLAQKMGFPPSIVDSAAENMIKLYNLFLKYDATMVEINPMVEDSDGAVLCMDAKINFDSNSAYRQKKIFDLQDWTQEDERDKDAAKANLNYIGLDGNIGCLVNGAGLAMATMDIIKLHGGTPANFLDVGGGATVHQVTEAFKLITSDKKVLSILVNIFGGIMRCDVIAQGIVMAVKDLEIKIPVVVRLQGTRVDDAKALIADSGLKILACDDLDEAAKMVVKLSEIVTLTKQAQVDVKFQLPI</sequence>
<gene>
    <name evidence="4" type="primary">SUCLA2</name>
</gene>